<gene>
    <name evidence="1" type="primary">rplY</name>
    <name evidence="1" type="synonym">ctc</name>
    <name type="ordered locus">Mrad2831_3946</name>
</gene>
<keyword id="KW-0687">Ribonucleoprotein</keyword>
<keyword id="KW-0689">Ribosomal protein</keyword>
<keyword id="KW-0694">RNA-binding</keyword>
<keyword id="KW-0699">rRNA-binding</keyword>
<protein>
    <recommendedName>
        <fullName evidence="1">Large ribosomal subunit protein bL25</fullName>
    </recommendedName>
    <alternativeName>
        <fullName evidence="3">50S ribosomal protein L25</fullName>
    </alternativeName>
    <alternativeName>
        <fullName evidence="1">General stress protein CTC</fullName>
    </alternativeName>
</protein>
<evidence type="ECO:0000255" key="1">
    <source>
        <dbReference type="HAMAP-Rule" id="MF_01334"/>
    </source>
</evidence>
<evidence type="ECO:0000256" key="2">
    <source>
        <dbReference type="SAM" id="MobiDB-lite"/>
    </source>
</evidence>
<evidence type="ECO:0000305" key="3"/>
<proteinExistence type="inferred from homology"/>
<accession>B1LZ78</accession>
<dbReference type="EMBL" id="CP001001">
    <property type="protein sequence ID" value="ACB25920.1"/>
    <property type="molecule type" value="Genomic_DNA"/>
</dbReference>
<dbReference type="RefSeq" id="WP_012320877.1">
    <property type="nucleotide sequence ID" value="NC_010505.1"/>
</dbReference>
<dbReference type="SMR" id="B1LZ78"/>
<dbReference type="STRING" id="426355.Mrad2831_3946"/>
<dbReference type="GeneID" id="6140001"/>
<dbReference type="KEGG" id="mrd:Mrad2831_3946"/>
<dbReference type="eggNOG" id="COG1825">
    <property type="taxonomic scope" value="Bacteria"/>
</dbReference>
<dbReference type="HOGENOM" id="CLU_075939_0_0_5"/>
<dbReference type="OrthoDB" id="9806411at2"/>
<dbReference type="Proteomes" id="UP000006589">
    <property type="component" value="Chromosome"/>
</dbReference>
<dbReference type="GO" id="GO:0022625">
    <property type="term" value="C:cytosolic large ribosomal subunit"/>
    <property type="evidence" value="ECO:0007669"/>
    <property type="project" value="TreeGrafter"/>
</dbReference>
<dbReference type="GO" id="GO:0008097">
    <property type="term" value="F:5S rRNA binding"/>
    <property type="evidence" value="ECO:0007669"/>
    <property type="project" value="InterPro"/>
</dbReference>
<dbReference type="GO" id="GO:0003735">
    <property type="term" value="F:structural constituent of ribosome"/>
    <property type="evidence" value="ECO:0007669"/>
    <property type="project" value="InterPro"/>
</dbReference>
<dbReference type="GO" id="GO:0006412">
    <property type="term" value="P:translation"/>
    <property type="evidence" value="ECO:0007669"/>
    <property type="project" value="UniProtKB-UniRule"/>
</dbReference>
<dbReference type="CDD" id="cd00495">
    <property type="entry name" value="Ribosomal_L25_TL5_CTC"/>
    <property type="match status" value="1"/>
</dbReference>
<dbReference type="Gene3D" id="2.170.120.20">
    <property type="entry name" value="Ribosomal protein L25, beta domain"/>
    <property type="match status" value="1"/>
</dbReference>
<dbReference type="Gene3D" id="2.40.240.10">
    <property type="entry name" value="Ribosomal Protein L25, Chain P"/>
    <property type="match status" value="1"/>
</dbReference>
<dbReference type="HAMAP" id="MF_01334">
    <property type="entry name" value="Ribosomal_bL25_CTC"/>
    <property type="match status" value="1"/>
</dbReference>
<dbReference type="InterPro" id="IPR020056">
    <property type="entry name" value="Rbsml_bL25/Gln-tRNA_synth_N"/>
</dbReference>
<dbReference type="InterPro" id="IPR011035">
    <property type="entry name" value="Ribosomal_bL25/Gln-tRNA_synth"/>
</dbReference>
<dbReference type="InterPro" id="IPR020057">
    <property type="entry name" value="Ribosomal_bL25_b-dom"/>
</dbReference>
<dbReference type="InterPro" id="IPR037121">
    <property type="entry name" value="Ribosomal_bL25_C"/>
</dbReference>
<dbReference type="InterPro" id="IPR001021">
    <property type="entry name" value="Ribosomal_bL25_long"/>
</dbReference>
<dbReference type="InterPro" id="IPR029751">
    <property type="entry name" value="Ribosomal_L25_dom"/>
</dbReference>
<dbReference type="InterPro" id="IPR020930">
    <property type="entry name" value="Ribosomal_uL5_bac-type"/>
</dbReference>
<dbReference type="NCBIfam" id="TIGR00731">
    <property type="entry name" value="bL25_bact_ctc"/>
    <property type="match status" value="1"/>
</dbReference>
<dbReference type="NCBIfam" id="NF004128">
    <property type="entry name" value="PRK05618.1-2"/>
    <property type="match status" value="1"/>
</dbReference>
<dbReference type="PANTHER" id="PTHR33284">
    <property type="entry name" value="RIBOSOMAL PROTEIN L25/GLN-TRNA SYNTHETASE, ANTI-CODON-BINDING DOMAIN-CONTAINING PROTEIN"/>
    <property type="match status" value="1"/>
</dbReference>
<dbReference type="PANTHER" id="PTHR33284:SF1">
    <property type="entry name" value="RIBOSOMAL PROTEIN L25_GLN-TRNA SYNTHETASE, ANTI-CODON-BINDING DOMAIN-CONTAINING PROTEIN"/>
    <property type="match status" value="1"/>
</dbReference>
<dbReference type="Pfam" id="PF01386">
    <property type="entry name" value="Ribosomal_L25p"/>
    <property type="match status" value="1"/>
</dbReference>
<dbReference type="Pfam" id="PF14693">
    <property type="entry name" value="Ribosomal_TL5_C"/>
    <property type="match status" value="1"/>
</dbReference>
<dbReference type="SUPFAM" id="SSF50715">
    <property type="entry name" value="Ribosomal protein L25-like"/>
    <property type="match status" value="1"/>
</dbReference>
<reference key="1">
    <citation type="submission" date="2008-03" db="EMBL/GenBank/DDBJ databases">
        <title>Complete sequence of chromosome of Methylobacterium radiotolerans JCM 2831.</title>
        <authorList>
            <consortium name="US DOE Joint Genome Institute"/>
            <person name="Copeland A."/>
            <person name="Lucas S."/>
            <person name="Lapidus A."/>
            <person name="Glavina del Rio T."/>
            <person name="Dalin E."/>
            <person name="Tice H."/>
            <person name="Bruce D."/>
            <person name="Goodwin L."/>
            <person name="Pitluck S."/>
            <person name="Kiss H."/>
            <person name="Brettin T."/>
            <person name="Detter J.C."/>
            <person name="Han C."/>
            <person name="Kuske C.R."/>
            <person name="Schmutz J."/>
            <person name="Larimer F."/>
            <person name="Land M."/>
            <person name="Hauser L."/>
            <person name="Kyrpides N."/>
            <person name="Mikhailova N."/>
            <person name="Marx C.J."/>
            <person name="Richardson P."/>
        </authorList>
    </citation>
    <scope>NUCLEOTIDE SEQUENCE [LARGE SCALE GENOMIC DNA]</scope>
    <source>
        <strain>ATCC 27329 / DSM 1819 / JCM 2831 / NBRC 15690 / NCIMB 10815 / 0-1</strain>
    </source>
</reference>
<feature type="chain" id="PRO_1000142534" description="Large ribosomal subunit protein bL25">
    <location>
        <begin position="1"/>
        <end position="227"/>
    </location>
</feature>
<feature type="region of interest" description="Disordered" evidence="2">
    <location>
        <begin position="199"/>
        <end position="227"/>
    </location>
</feature>
<feature type="compositionally biased region" description="Basic and acidic residues" evidence="2">
    <location>
        <begin position="209"/>
        <end position="227"/>
    </location>
</feature>
<name>RL25_METRJ</name>
<organism>
    <name type="scientific">Methylobacterium radiotolerans (strain ATCC 27329 / DSM 1819 / JCM 2831 / NBRC 15690 / NCIMB 10815 / 0-1)</name>
    <dbReference type="NCBI Taxonomy" id="426355"/>
    <lineage>
        <taxon>Bacteria</taxon>
        <taxon>Pseudomonadati</taxon>
        <taxon>Pseudomonadota</taxon>
        <taxon>Alphaproteobacteria</taxon>
        <taxon>Hyphomicrobiales</taxon>
        <taxon>Methylobacteriaceae</taxon>
        <taxon>Methylobacterium</taxon>
    </lineage>
</organism>
<sequence>MSAVKTLEAVARDRVGKGAARAVRRQGQIPAVIYGGGQPPQSIAVDLIRTRTLIYAGGFKTTLFEINAGGKKVRAIPRDFQLDPVTGVPLHVDFLRVVSGQTVTVEVPVHFVNEDAAPGIKKLGGTLNIVAHTLSLEVAPDQIPDAIEVDLTGRAIGDVIHVSDIKIPAGTYTGEATDPVANIVPPTVLGAEVEAEEAAIAEAQSAEAAEEKAEESAEDEKKDGEEA</sequence>
<comment type="function">
    <text evidence="1">This is one of the proteins that binds to the 5S RNA in the ribosome where it forms part of the central protuberance.</text>
</comment>
<comment type="subunit">
    <text evidence="1">Part of the 50S ribosomal subunit; part of the 5S rRNA/L5/L18/L25 subcomplex. Contacts the 5S rRNA. Binds to the 5S rRNA independently of L5 and L18.</text>
</comment>
<comment type="similarity">
    <text evidence="1">Belongs to the bacterial ribosomal protein bL25 family. CTC subfamily.</text>
</comment>